<dbReference type="EC" id="2.4.2.7" evidence="1"/>
<dbReference type="EMBL" id="CP000422">
    <property type="protein sequence ID" value="ABJ68183.1"/>
    <property type="molecule type" value="Genomic_DNA"/>
</dbReference>
<dbReference type="RefSeq" id="WP_002833433.1">
    <property type="nucleotide sequence ID" value="NC_008525.1"/>
</dbReference>
<dbReference type="SMR" id="Q03F39"/>
<dbReference type="STRING" id="278197.PEPE_1129"/>
<dbReference type="GeneID" id="33062529"/>
<dbReference type="KEGG" id="ppe:PEPE_1129"/>
<dbReference type="eggNOG" id="COG0503">
    <property type="taxonomic scope" value="Bacteria"/>
</dbReference>
<dbReference type="HOGENOM" id="CLU_063339_3_0_9"/>
<dbReference type="OrthoDB" id="9803963at2"/>
<dbReference type="UniPathway" id="UPA00588">
    <property type="reaction ID" value="UER00646"/>
</dbReference>
<dbReference type="Proteomes" id="UP000000773">
    <property type="component" value="Chromosome"/>
</dbReference>
<dbReference type="GO" id="GO:0005737">
    <property type="term" value="C:cytoplasm"/>
    <property type="evidence" value="ECO:0007669"/>
    <property type="project" value="UniProtKB-SubCell"/>
</dbReference>
<dbReference type="GO" id="GO:0002055">
    <property type="term" value="F:adenine binding"/>
    <property type="evidence" value="ECO:0007669"/>
    <property type="project" value="TreeGrafter"/>
</dbReference>
<dbReference type="GO" id="GO:0003999">
    <property type="term" value="F:adenine phosphoribosyltransferase activity"/>
    <property type="evidence" value="ECO:0007669"/>
    <property type="project" value="UniProtKB-UniRule"/>
</dbReference>
<dbReference type="GO" id="GO:0016208">
    <property type="term" value="F:AMP binding"/>
    <property type="evidence" value="ECO:0007669"/>
    <property type="project" value="TreeGrafter"/>
</dbReference>
<dbReference type="GO" id="GO:0006168">
    <property type="term" value="P:adenine salvage"/>
    <property type="evidence" value="ECO:0007669"/>
    <property type="project" value="InterPro"/>
</dbReference>
<dbReference type="GO" id="GO:0044209">
    <property type="term" value="P:AMP salvage"/>
    <property type="evidence" value="ECO:0007669"/>
    <property type="project" value="UniProtKB-UniRule"/>
</dbReference>
<dbReference type="GO" id="GO:0006166">
    <property type="term" value="P:purine ribonucleoside salvage"/>
    <property type="evidence" value="ECO:0007669"/>
    <property type="project" value="UniProtKB-KW"/>
</dbReference>
<dbReference type="CDD" id="cd06223">
    <property type="entry name" value="PRTases_typeI"/>
    <property type="match status" value="1"/>
</dbReference>
<dbReference type="FunFam" id="3.40.50.2020:FF:000004">
    <property type="entry name" value="Adenine phosphoribosyltransferase"/>
    <property type="match status" value="1"/>
</dbReference>
<dbReference type="Gene3D" id="3.40.50.2020">
    <property type="match status" value="1"/>
</dbReference>
<dbReference type="HAMAP" id="MF_00004">
    <property type="entry name" value="Aden_phosphoribosyltr"/>
    <property type="match status" value="1"/>
</dbReference>
<dbReference type="InterPro" id="IPR005764">
    <property type="entry name" value="Ade_phspho_trans"/>
</dbReference>
<dbReference type="InterPro" id="IPR000836">
    <property type="entry name" value="PRibTrfase_dom"/>
</dbReference>
<dbReference type="InterPro" id="IPR029057">
    <property type="entry name" value="PRTase-like"/>
</dbReference>
<dbReference type="InterPro" id="IPR050054">
    <property type="entry name" value="UPRTase/APRTase"/>
</dbReference>
<dbReference type="NCBIfam" id="TIGR01090">
    <property type="entry name" value="apt"/>
    <property type="match status" value="1"/>
</dbReference>
<dbReference type="NCBIfam" id="NF002633">
    <property type="entry name" value="PRK02304.1-2"/>
    <property type="match status" value="1"/>
</dbReference>
<dbReference type="NCBIfam" id="NF002634">
    <property type="entry name" value="PRK02304.1-3"/>
    <property type="match status" value="1"/>
</dbReference>
<dbReference type="NCBIfam" id="NF002636">
    <property type="entry name" value="PRK02304.1-5"/>
    <property type="match status" value="1"/>
</dbReference>
<dbReference type="PANTHER" id="PTHR32315">
    <property type="entry name" value="ADENINE PHOSPHORIBOSYLTRANSFERASE"/>
    <property type="match status" value="1"/>
</dbReference>
<dbReference type="PANTHER" id="PTHR32315:SF3">
    <property type="entry name" value="ADENINE PHOSPHORIBOSYLTRANSFERASE"/>
    <property type="match status" value="1"/>
</dbReference>
<dbReference type="Pfam" id="PF00156">
    <property type="entry name" value="Pribosyltran"/>
    <property type="match status" value="1"/>
</dbReference>
<dbReference type="SUPFAM" id="SSF53271">
    <property type="entry name" value="PRTase-like"/>
    <property type="match status" value="1"/>
</dbReference>
<accession>Q03F39</accession>
<protein>
    <recommendedName>
        <fullName evidence="1">Adenine phosphoribosyltransferase</fullName>
        <shortName evidence="1">APRT</shortName>
        <ecNumber evidence="1">2.4.2.7</ecNumber>
    </recommendedName>
</protein>
<reference key="1">
    <citation type="journal article" date="2006" name="Proc. Natl. Acad. Sci. U.S.A.">
        <title>Comparative genomics of the lactic acid bacteria.</title>
        <authorList>
            <person name="Makarova K.S."/>
            <person name="Slesarev A."/>
            <person name="Wolf Y.I."/>
            <person name="Sorokin A."/>
            <person name="Mirkin B."/>
            <person name="Koonin E.V."/>
            <person name="Pavlov A."/>
            <person name="Pavlova N."/>
            <person name="Karamychev V."/>
            <person name="Polouchine N."/>
            <person name="Shakhova V."/>
            <person name="Grigoriev I."/>
            <person name="Lou Y."/>
            <person name="Rohksar D."/>
            <person name="Lucas S."/>
            <person name="Huang K."/>
            <person name="Goodstein D.M."/>
            <person name="Hawkins T."/>
            <person name="Plengvidhya V."/>
            <person name="Welker D."/>
            <person name="Hughes J."/>
            <person name="Goh Y."/>
            <person name="Benson A."/>
            <person name="Baldwin K."/>
            <person name="Lee J.-H."/>
            <person name="Diaz-Muniz I."/>
            <person name="Dosti B."/>
            <person name="Smeianov V."/>
            <person name="Wechter W."/>
            <person name="Barabote R."/>
            <person name="Lorca G."/>
            <person name="Altermann E."/>
            <person name="Barrangou R."/>
            <person name="Ganesan B."/>
            <person name="Xie Y."/>
            <person name="Rawsthorne H."/>
            <person name="Tamir D."/>
            <person name="Parker C."/>
            <person name="Breidt F."/>
            <person name="Broadbent J.R."/>
            <person name="Hutkins R."/>
            <person name="O'Sullivan D."/>
            <person name="Steele J."/>
            <person name="Unlu G."/>
            <person name="Saier M.H. Jr."/>
            <person name="Klaenhammer T."/>
            <person name="Richardson P."/>
            <person name="Kozyavkin S."/>
            <person name="Weimer B.C."/>
            <person name="Mills D.A."/>
        </authorList>
    </citation>
    <scope>NUCLEOTIDE SEQUENCE [LARGE SCALE GENOMIC DNA]</scope>
    <source>
        <strain>ATCC 25745 / CCUG 21536 / LMG 10740 / 183-1w</strain>
    </source>
</reference>
<proteinExistence type="inferred from homology"/>
<gene>
    <name evidence="1" type="primary">apt</name>
    <name type="ordered locus">PEPE_1129</name>
</gene>
<feature type="chain" id="PRO_0000329363" description="Adenine phosphoribosyltransferase">
    <location>
        <begin position="1"/>
        <end position="172"/>
    </location>
</feature>
<organism>
    <name type="scientific">Pediococcus pentosaceus (strain ATCC 25745 / CCUG 21536 / LMG 10740 / 183-1w)</name>
    <dbReference type="NCBI Taxonomy" id="278197"/>
    <lineage>
        <taxon>Bacteria</taxon>
        <taxon>Bacillati</taxon>
        <taxon>Bacillota</taxon>
        <taxon>Bacilli</taxon>
        <taxon>Lactobacillales</taxon>
        <taxon>Lactobacillaceae</taxon>
        <taxon>Pediococcus</taxon>
    </lineage>
</organism>
<sequence length="172" mass="18913">MTLDLHDYVASIQDFPEKGVTFRDISPLMENGEAYRQATNAIIKFARDKGVEMIVGPEARGFIVGCPVAYEMGIGFAPARKKGKLPRETVKATYGLEYGKSELYLQKDAIKPGQKVLITDDLLATGGTIAATIELVEKLGGIVVGTAFFIELKDLNGREKIKDYDTLSLMEY</sequence>
<keyword id="KW-0963">Cytoplasm</keyword>
<keyword id="KW-0328">Glycosyltransferase</keyword>
<keyword id="KW-0660">Purine salvage</keyword>
<keyword id="KW-0808">Transferase</keyword>
<evidence type="ECO:0000255" key="1">
    <source>
        <dbReference type="HAMAP-Rule" id="MF_00004"/>
    </source>
</evidence>
<name>APT_PEDPA</name>
<comment type="function">
    <text evidence="1">Catalyzes a salvage reaction resulting in the formation of AMP, that is energically less costly than de novo synthesis.</text>
</comment>
<comment type="catalytic activity">
    <reaction evidence="1">
        <text>AMP + diphosphate = 5-phospho-alpha-D-ribose 1-diphosphate + adenine</text>
        <dbReference type="Rhea" id="RHEA:16609"/>
        <dbReference type="ChEBI" id="CHEBI:16708"/>
        <dbReference type="ChEBI" id="CHEBI:33019"/>
        <dbReference type="ChEBI" id="CHEBI:58017"/>
        <dbReference type="ChEBI" id="CHEBI:456215"/>
        <dbReference type="EC" id="2.4.2.7"/>
    </reaction>
</comment>
<comment type="pathway">
    <text evidence="1">Purine metabolism; AMP biosynthesis via salvage pathway; AMP from adenine: step 1/1.</text>
</comment>
<comment type="subunit">
    <text evidence="1">Homodimer.</text>
</comment>
<comment type="subcellular location">
    <subcellularLocation>
        <location evidence="1">Cytoplasm</location>
    </subcellularLocation>
</comment>
<comment type="similarity">
    <text evidence="1">Belongs to the purine/pyrimidine phosphoribosyltransferase family.</text>
</comment>